<gene>
    <name evidence="1" type="primary">groES</name>
    <name evidence="1" type="synonym">groS</name>
    <name type="ordered locus">PMI2544</name>
</gene>
<feature type="chain" id="PRO_1000129693" description="Co-chaperonin GroES">
    <location>
        <begin position="1"/>
        <end position="97"/>
    </location>
</feature>
<name>CH10_PROMH</name>
<proteinExistence type="inferred from homology"/>
<keyword id="KW-0143">Chaperone</keyword>
<keyword id="KW-0963">Cytoplasm</keyword>
<keyword id="KW-1185">Reference proteome</keyword>
<accession>B4EXE3</accession>
<dbReference type="EMBL" id="AM942759">
    <property type="protein sequence ID" value="CAR45030.1"/>
    <property type="molecule type" value="Genomic_DNA"/>
</dbReference>
<dbReference type="RefSeq" id="WP_004249265.1">
    <property type="nucleotide sequence ID" value="NC_010554.1"/>
</dbReference>
<dbReference type="SMR" id="B4EXE3"/>
<dbReference type="EnsemblBacteria" id="CAR45030">
    <property type="protein sequence ID" value="CAR45030"/>
    <property type="gene ID" value="PMI2544"/>
</dbReference>
<dbReference type="GeneID" id="6800017"/>
<dbReference type="KEGG" id="pmr:PMI2544"/>
<dbReference type="eggNOG" id="COG0234">
    <property type="taxonomic scope" value="Bacteria"/>
</dbReference>
<dbReference type="HOGENOM" id="CLU_132825_1_1_6"/>
<dbReference type="Proteomes" id="UP000008319">
    <property type="component" value="Chromosome"/>
</dbReference>
<dbReference type="GO" id="GO:0005737">
    <property type="term" value="C:cytoplasm"/>
    <property type="evidence" value="ECO:0007669"/>
    <property type="project" value="UniProtKB-SubCell"/>
</dbReference>
<dbReference type="GO" id="GO:0005524">
    <property type="term" value="F:ATP binding"/>
    <property type="evidence" value="ECO:0007669"/>
    <property type="project" value="InterPro"/>
</dbReference>
<dbReference type="GO" id="GO:0046872">
    <property type="term" value="F:metal ion binding"/>
    <property type="evidence" value="ECO:0007669"/>
    <property type="project" value="TreeGrafter"/>
</dbReference>
<dbReference type="GO" id="GO:0044183">
    <property type="term" value="F:protein folding chaperone"/>
    <property type="evidence" value="ECO:0007669"/>
    <property type="project" value="InterPro"/>
</dbReference>
<dbReference type="GO" id="GO:0051087">
    <property type="term" value="F:protein-folding chaperone binding"/>
    <property type="evidence" value="ECO:0007669"/>
    <property type="project" value="TreeGrafter"/>
</dbReference>
<dbReference type="GO" id="GO:0051082">
    <property type="term" value="F:unfolded protein binding"/>
    <property type="evidence" value="ECO:0007669"/>
    <property type="project" value="TreeGrafter"/>
</dbReference>
<dbReference type="GO" id="GO:0051085">
    <property type="term" value="P:chaperone cofactor-dependent protein refolding"/>
    <property type="evidence" value="ECO:0007669"/>
    <property type="project" value="TreeGrafter"/>
</dbReference>
<dbReference type="CDD" id="cd00320">
    <property type="entry name" value="cpn10"/>
    <property type="match status" value="1"/>
</dbReference>
<dbReference type="FunFam" id="2.30.33.40:FF:000001">
    <property type="entry name" value="10 kDa chaperonin"/>
    <property type="match status" value="1"/>
</dbReference>
<dbReference type="Gene3D" id="2.30.33.40">
    <property type="entry name" value="GroES chaperonin"/>
    <property type="match status" value="1"/>
</dbReference>
<dbReference type="HAMAP" id="MF_00580">
    <property type="entry name" value="CH10"/>
    <property type="match status" value="1"/>
</dbReference>
<dbReference type="InterPro" id="IPR020818">
    <property type="entry name" value="Chaperonin_GroES"/>
</dbReference>
<dbReference type="InterPro" id="IPR037124">
    <property type="entry name" value="Chaperonin_GroES_sf"/>
</dbReference>
<dbReference type="InterPro" id="IPR018369">
    <property type="entry name" value="Chaprnonin_Cpn10_CS"/>
</dbReference>
<dbReference type="InterPro" id="IPR011032">
    <property type="entry name" value="GroES-like_sf"/>
</dbReference>
<dbReference type="NCBIfam" id="NF001526">
    <property type="entry name" value="PRK00364.1-1"/>
    <property type="match status" value="1"/>
</dbReference>
<dbReference type="NCBIfam" id="NF001527">
    <property type="entry name" value="PRK00364.1-2"/>
    <property type="match status" value="1"/>
</dbReference>
<dbReference type="NCBIfam" id="NF001531">
    <property type="entry name" value="PRK00364.2-2"/>
    <property type="match status" value="1"/>
</dbReference>
<dbReference type="PANTHER" id="PTHR10772">
    <property type="entry name" value="10 KDA HEAT SHOCK PROTEIN"/>
    <property type="match status" value="1"/>
</dbReference>
<dbReference type="PANTHER" id="PTHR10772:SF58">
    <property type="entry name" value="CO-CHAPERONIN GROES"/>
    <property type="match status" value="1"/>
</dbReference>
<dbReference type="Pfam" id="PF00166">
    <property type="entry name" value="Cpn10"/>
    <property type="match status" value="1"/>
</dbReference>
<dbReference type="PRINTS" id="PR00297">
    <property type="entry name" value="CHAPERONIN10"/>
</dbReference>
<dbReference type="SMART" id="SM00883">
    <property type="entry name" value="Cpn10"/>
    <property type="match status" value="1"/>
</dbReference>
<dbReference type="SUPFAM" id="SSF50129">
    <property type="entry name" value="GroES-like"/>
    <property type="match status" value="1"/>
</dbReference>
<dbReference type="PROSITE" id="PS00681">
    <property type="entry name" value="CHAPERONINS_CPN10"/>
    <property type="match status" value="1"/>
</dbReference>
<comment type="function">
    <text evidence="1">Together with the chaperonin GroEL, plays an essential role in assisting protein folding. The GroEL-GroES system forms a nano-cage that allows encapsulation of the non-native substrate proteins and provides a physical environment optimized to promote and accelerate protein folding. GroES binds to the apical surface of the GroEL ring, thereby capping the opening of the GroEL channel.</text>
</comment>
<comment type="subunit">
    <text evidence="1">Heptamer of 7 subunits arranged in a ring. Interacts with the chaperonin GroEL.</text>
</comment>
<comment type="subcellular location">
    <subcellularLocation>
        <location evidence="1">Cytoplasm</location>
    </subcellularLocation>
</comment>
<comment type="similarity">
    <text evidence="1">Belongs to the GroES chaperonin family.</text>
</comment>
<organism>
    <name type="scientific">Proteus mirabilis (strain HI4320)</name>
    <dbReference type="NCBI Taxonomy" id="529507"/>
    <lineage>
        <taxon>Bacteria</taxon>
        <taxon>Pseudomonadati</taxon>
        <taxon>Pseudomonadota</taxon>
        <taxon>Gammaproteobacteria</taxon>
        <taxon>Enterobacterales</taxon>
        <taxon>Morganellaceae</taxon>
        <taxon>Proteus</taxon>
    </lineage>
</organism>
<protein>
    <recommendedName>
        <fullName evidence="1">Co-chaperonin GroES</fullName>
    </recommendedName>
    <alternativeName>
        <fullName evidence="1">10 kDa chaperonin</fullName>
    </alternativeName>
    <alternativeName>
        <fullName evidence="1">Chaperonin-10</fullName>
        <shortName evidence="1">Cpn10</shortName>
    </alternativeName>
</protein>
<reference key="1">
    <citation type="journal article" date="2008" name="J. Bacteriol.">
        <title>Complete genome sequence of uropathogenic Proteus mirabilis, a master of both adherence and motility.</title>
        <authorList>
            <person name="Pearson M.M."/>
            <person name="Sebaihia M."/>
            <person name="Churcher C."/>
            <person name="Quail M.A."/>
            <person name="Seshasayee A.S."/>
            <person name="Luscombe N.M."/>
            <person name="Abdellah Z."/>
            <person name="Arrosmith C."/>
            <person name="Atkin B."/>
            <person name="Chillingworth T."/>
            <person name="Hauser H."/>
            <person name="Jagels K."/>
            <person name="Moule S."/>
            <person name="Mungall K."/>
            <person name="Norbertczak H."/>
            <person name="Rabbinowitsch E."/>
            <person name="Walker D."/>
            <person name="Whithead S."/>
            <person name="Thomson N.R."/>
            <person name="Rather P.N."/>
            <person name="Parkhill J."/>
            <person name="Mobley H.L.T."/>
        </authorList>
    </citation>
    <scope>NUCLEOTIDE SEQUENCE [LARGE SCALE GENOMIC DNA]</scope>
    <source>
        <strain>HI4320</strain>
    </source>
</reference>
<evidence type="ECO:0000255" key="1">
    <source>
        <dbReference type="HAMAP-Rule" id="MF_00580"/>
    </source>
</evidence>
<sequence length="97" mass="10375">MKIRPLHDRVIVKRKEVEAKSAGGIVLTGSAAGKSTRGEILAVGNGRIMENGEVKPLDVKVGDIVIFNDGYGVKSEKIDNEDVLIMSESDILAIVEA</sequence>